<reference key="1">
    <citation type="journal article" date="1999" name="Immunogenetics">
        <title>Molecular analysis of complement component C8beta and C9 cDNAs of Japanese flounder, Paralichthys olivaceus.</title>
        <authorList>
            <person name="Katagiri T."/>
            <person name="Hirono I."/>
            <person name="Aoki T."/>
        </authorList>
    </citation>
    <scope>NUCLEOTIDE SEQUENCE [MRNA]</scope>
</reference>
<evidence type="ECO:0000250" key="1">
    <source>
        <dbReference type="UniProtKB" id="P07358"/>
    </source>
</evidence>
<evidence type="ECO:0000255" key="2"/>
<evidence type="ECO:0000255" key="3">
    <source>
        <dbReference type="PROSITE-ProRule" id="PRU00124"/>
    </source>
</evidence>
<evidence type="ECO:0000255" key="4">
    <source>
        <dbReference type="PROSITE-ProRule" id="PRU00210"/>
    </source>
</evidence>
<evidence type="ECO:0000255" key="5">
    <source>
        <dbReference type="PROSITE-ProRule" id="PRU00745"/>
    </source>
</evidence>
<evidence type="ECO:0000305" key="6"/>
<comment type="function">
    <text evidence="1">Component of the membrane attack complex (MAC), a multiprotein complex activated by the complement cascade, which inserts into a target cell membrane and forms a pore, leading to target cell membrane rupture and cell lysis. The MAC is initiated by proteolytic cleavage of C5 into complement C5b in response to the classical, alternative, lectin and GZMK complement pathways. The complement pathways consist in a cascade of proteins that leads to phagocytosis and breakdown of pathogens and signaling that strengthens the adaptive immune system. C8B, together with C8A and C8G, inserts into the target membrane, but does not form pores by itself. During MAC assembly, associates with C5b, C6 and C7 to form the C5b8 intermediate complex that inserts into the target membrane and traverses the bilayer increasing membrane rigidity.</text>
</comment>
<comment type="subunit">
    <text evidence="1">Heterotrimer of 3 chains: alpha (C8A), beta (C8B) and gamma (C8G); the alpha and gamma chains are disulfide bonded. Component of the membrane attack complex (MAC), composed of complement C5b, C6, C7, C8A, C8B, C8G and multiple copies of the pore-forming subunit C9.</text>
</comment>
<comment type="subcellular location">
    <subcellularLocation>
        <location evidence="1">Secreted</location>
    </subcellularLocation>
    <subcellularLocation>
        <location evidence="1">Target cell membrane</location>
        <topology evidence="1">Multi-pass membrane protein</topology>
    </subcellularLocation>
    <text evidence="1">Secreted as soluble protein. Inserts into the cell membrane of target cells.</text>
</comment>
<comment type="similarity">
    <text evidence="6">Belongs to the complement C6/C7/C8/C9 family.</text>
</comment>
<proteinExistence type="evidence at transcript level"/>
<gene>
    <name type="primary">c8b</name>
</gene>
<accession>Q9PVW7</accession>
<dbReference type="EMBL" id="AB020962">
    <property type="protein sequence ID" value="BAA86877.1"/>
    <property type="molecule type" value="mRNA"/>
</dbReference>
<dbReference type="SMR" id="Q9PVW7"/>
<dbReference type="GlyCosmos" id="Q9PVW7">
    <property type="glycosylation" value="4 sites, No reported glycans"/>
</dbReference>
<dbReference type="GO" id="GO:0005576">
    <property type="term" value="C:extracellular region"/>
    <property type="evidence" value="ECO:0007669"/>
    <property type="project" value="UniProtKB-SubCell"/>
</dbReference>
<dbReference type="GO" id="GO:0005579">
    <property type="term" value="C:membrane attack complex"/>
    <property type="evidence" value="ECO:0007669"/>
    <property type="project" value="UniProtKB-KW"/>
</dbReference>
<dbReference type="GO" id="GO:0006957">
    <property type="term" value="P:complement activation, alternative pathway"/>
    <property type="evidence" value="ECO:0007669"/>
    <property type="project" value="UniProtKB-KW"/>
</dbReference>
<dbReference type="GO" id="GO:0006958">
    <property type="term" value="P:complement activation, classical pathway"/>
    <property type="evidence" value="ECO:0007669"/>
    <property type="project" value="UniProtKB-KW"/>
</dbReference>
<dbReference type="GO" id="GO:0031640">
    <property type="term" value="P:killing of cells of another organism"/>
    <property type="evidence" value="ECO:0007669"/>
    <property type="project" value="UniProtKB-KW"/>
</dbReference>
<dbReference type="CDD" id="cd00054">
    <property type="entry name" value="EGF_CA"/>
    <property type="match status" value="1"/>
</dbReference>
<dbReference type="CDD" id="cd00112">
    <property type="entry name" value="LDLa"/>
    <property type="match status" value="1"/>
</dbReference>
<dbReference type="Gene3D" id="2.10.25.10">
    <property type="entry name" value="Laminin"/>
    <property type="match status" value="1"/>
</dbReference>
<dbReference type="Gene3D" id="4.10.400.10">
    <property type="entry name" value="Low-density Lipoprotein Receptor"/>
    <property type="match status" value="1"/>
</dbReference>
<dbReference type="Gene3D" id="2.20.100.10">
    <property type="entry name" value="Thrombospondin type-1 (TSP1) repeat"/>
    <property type="match status" value="2"/>
</dbReference>
<dbReference type="InterPro" id="IPR048831">
    <property type="entry name" value="C8A_B_C6_EGF-like"/>
</dbReference>
<dbReference type="InterPro" id="IPR000742">
    <property type="entry name" value="EGF-like_dom"/>
</dbReference>
<dbReference type="InterPro" id="IPR036055">
    <property type="entry name" value="LDL_receptor-like_sf"/>
</dbReference>
<dbReference type="InterPro" id="IPR023415">
    <property type="entry name" value="LDLR_class-A_CS"/>
</dbReference>
<dbReference type="InterPro" id="IPR002172">
    <property type="entry name" value="LDrepeatLR_classA_rpt"/>
</dbReference>
<dbReference type="InterPro" id="IPR001862">
    <property type="entry name" value="MAC_perforin"/>
</dbReference>
<dbReference type="InterPro" id="IPR020864">
    <property type="entry name" value="MACPF"/>
</dbReference>
<dbReference type="InterPro" id="IPR020863">
    <property type="entry name" value="MACPF_CS"/>
</dbReference>
<dbReference type="InterPro" id="IPR000884">
    <property type="entry name" value="TSP1_rpt"/>
</dbReference>
<dbReference type="InterPro" id="IPR036383">
    <property type="entry name" value="TSP1_rpt_sf"/>
</dbReference>
<dbReference type="PANTHER" id="PTHR45742">
    <property type="entry name" value="COMPLEMENT COMPONENT C6"/>
    <property type="match status" value="1"/>
</dbReference>
<dbReference type="PANTHER" id="PTHR45742:SF5">
    <property type="entry name" value="COMPLEMENT COMPONENT C8 BETA CHAIN"/>
    <property type="match status" value="1"/>
</dbReference>
<dbReference type="Pfam" id="PF21195">
    <property type="entry name" value="EGF_C8A_B_C6"/>
    <property type="match status" value="1"/>
</dbReference>
<dbReference type="Pfam" id="PF00057">
    <property type="entry name" value="Ldl_recept_a"/>
    <property type="match status" value="1"/>
</dbReference>
<dbReference type="Pfam" id="PF01823">
    <property type="entry name" value="MACPF"/>
    <property type="match status" value="1"/>
</dbReference>
<dbReference type="PRINTS" id="PR00764">
    <property type="entry name" value="COMPLEMENTC9"/>
</dbReference>
<dbReference type="SMART" id="SM00192">
    <property type="entry name" value="LDLa"/>
    <property type="match status" value="1"/>
</dbReference>
<dbReference type="SMART" id="SM00457">
    <property type="entry name" value="MACPF"/>
    <property type="match status" value="1"/>
</dbReference>
<dbReference type="SMART" id="SM00209">
    <property type="entry name" value="TSP1"/>
    <property type="match status" value="2"/>
</dbReference>
<dbReference type="SUPFAM" id="SSF57196">
    <property type="entry name" value="EGF/Laminin"/>
    <property type="match status" value="1"/>
</dbReference>
<dbReference type="SUPFAM" id="SSF57424">
    <property type="entry name" value="LDL receptor-like module"/>
    <property type="match status" value="1"/>
</dbReference>
<dbReference type="SUPFAM" id="SSF82895">
    <property type="entry name" value="TSP-1 type 1 repeat"/>
    <property type="match status" value="2"/>
</dbReference>
<dbReference type="PROSITE" id="PS00022">
    <property type="entry name" value="EGF_1"/>
    <property type="match status" value="1"/>
</dbReference>
<dbReference type="PROSITE" id="PS01186">
    <property type="entry name" value="EGF_2"/>
    <property type="match status" value="1"/>
</dbReference>
<dbReference type="PROSITE" id="PS01209">
    <property type="entry name" value="LDLRA_1"/>
    <property type="match status" value="1"/>
</dbReference>
<dbReference type="PROSITE" id="PS50068">
    <property type="entry name" value="LDLRA_2"/>
    <property type="match status" value="1"/>
</dbReference>
<dbReference type="PROSITE" id="PS00279">
    <property type="entry name" value="MACPF_1"/>
    <property type="match status" value="1"/>
</dbReference>
<dbReference type="PROSITE" id="PS51412">
    <property type="entry name" value="MACPF_2"/>
    <property type="match status" value="1"/>
</dbReference>
<dbReference type="PROSITE" id="PS50092">
    <property type="entry name" value="TSP1"/>
    <property type="match status" value="2"/>
</dbReference>
<protein>
    <recommendedName>
        <fullName>Complement component C8 beta chain</fullName>
    </recommendedName>
    <alternativeName>
        <fullName>Complement component 8 subunit beta</fullName>
    </alternativeName>
</protein>
<feature type="signal peptide" evidence="2">
    <location>
        <begin position="1"/>
        <end position="30"/>
    </location>
</feature>
<feature type="propeptide" id="PRO_0000023599" evidence="1">
    <location>
        <begin position="31"/>
        <end position="46"/>
    </location>
</feature>
<feature type="chain" id="PRO_0000023600" description="Complement component C8 beta chain">
    <location>
        <begin position="47"/>
        <end position="588"/>
    </location>
</feature>
<feature type="transmembrane region" description="Beta stranded" evidence="1">
    <location>
        <begin position="248"/>
        <end position="255"/>
    </location>
</feature>
<feature type="transmembrane region" description="Beta stranded" evidence="1">
    <location>
        <begin position="258"/>
        <end position="265"/>
    </location>
</feature>
<feature type="transmembrane region" description="Beta stranded" evidence="1">
    <location>
        <begin position="375"/>
        <end position="382"/>
    </location>
</feature>
<feature type="transmembrane region" description="Beta stranded" evidence="1">
    <location>
        <begin position="388"/>
        <end position="395"/>
    </location>
</feature>
<feature type="domain" description="TSP type-1 1" evidence="4">
    <location>
        <begin position="58"/>
        <end position="113"/>
    </location>
</feature>
<feature type="domain" description="LDL-receptor class A" evidence="3">
    <location>
        <begin position="115"/>
        <end position="152"/>
    </location>
</feature>
<feature type="domain" description="MACPF" evidence="5">
    <location>
        <begin position="154"/>
        <end position="500"/>
    </location>
</feature>
<feature type="domain" description="EGF-like">
    <location>
        <begin position="501"/>
        <end position="531"/>
    </location>
</feature>
<feature type="domain" description="TSP type-1 2" evidence="4">
    <location>
        <begin position="542"/>
        <end position="588"/>
    </location>
</feature>
<feature type="binding site" evidence="1">
    <location>
        <position position="134"/>
    </location>
    <ligand>
        <name>Ca(2+)</name>
        <dbReference type="ChEBI" id="CHEBI:29108"/>
    </ligand>
</feature>
<feature type="binding site" evidence="1">
    <location>
        <position position="137"/>
    </location>
    <ligand>
        <name>Ca(2+)</name>
        <dbReference type="ChEBI" id="CHEBI:29108"/>
    </ligand>
</feature>
<feature type="binding site" evidence="1">
    <location>
        <position position="139"/>
    </location>
    <ligand>
        <name>Ca(2+)</name>
        <dbReference type="ChEBI" id="CHEBI:29108"/>
    </ligand>
</feature>
<feature type="binding site" evidence="1">
    <location>
        <position position="141"/>
    </location>
    <ligand>
        <name>Ca(2+)</name>
        <dbReference type="ChEBI" id="CHEBI:29108"/>
    </ligand>
</feature>
<feature type="binding site" evidence="1">
    <location>
        <position position="147"/>
    </location>
    <ligand>
        <name>Ca(2+)</name>
        <dbReference type="ChEBI" id="CHEBI:29108"/>
    </ligand>
</feature>
<feature type="binding site" evidence="1">
    <location>
        <position position="148"/>
    </location>
    <ligand>
        <name>Ca(2+)</name>
        <dbReference type="ChEBI" id="CHEBI:29108"/>
    </ligand>
</feature>
<feature type="glycosylation site" description="C-linked (Man) tryptophan" evidence="1">
    <location>
        <position position="64"/>
    </location>
</feature>
<feature type="glycosylation site" description="C-linked (Man) tryptophan" evidence="1">
    <location>
        <position position="67"/>
    </location>
</feature>
<feature type="glycosylation site" description="C-linked (Man) tryptophan" evidence="1">
    <location>
        <position position="548"/>
    </location>
</feature>
<feature type="glycosylation site" description="C-linked (Man) tryptophan" evidence="1">
    <location>
        <position position="551"/>
    </location>
</feature>
<feature type="disulfide bond" evidence="1">
    <location>
        <begin position="59"/>
        <end position="94"/>
    </location>
</feature>
<feature type="disulfide bond" evidence="1">
    <location>
        <begin position="70"/>
        <end position="104"/>
    </location>
</feature>
<feature type="disulfide bond" evidence="1">
    <location>
        <begin position="73"/>
        <end position="112"/>
    </location>
</feature>
<feature type="disulfide bond" evidence="1">
    <location>
        <begin position="118"/>
        <end position="129"/>
    </location>
</feature>
<feature type="disulfide bond" evidence="1">
    <location>
        <begin position="123"/>
        <end position="142"/>
    </location>
</feature>
<feature type="disulfide bond" evidence="1">
    <location>
        <begin position="136"/>
        <end position="151"/>
    </location>
</feature>
<feature type="disulfide bond" evidence="1">
    <location>
        <begin position="158"/>
        <end position="196"/>
    </location>
</feature>
<feature type="disulfide bond" evidence="1">
    <location>
        <begin position="374"/>
        <end position="399"/>
    </location>
</feature>
<feature type="disulfide bond" evidence="1">
    <location>
        <begin position="499"/>
        <end position="547"/>
    </location>
</feature>
<feature type="disulfide bond" evidence="1">
    <location>
        <begin position="501"/>
        <end position="517"/>
    </location>
</feature>
<feature type="disulfide bond" evidence="1">
    <location>
        <begin position="504"/>
        <end position="519"/>
    </location>
</feature>
<feature type="disulfide bond" evidence="1">
    <location>
        <begin position="521"/>
        <end position="530"/>
    </location>
</feature>
<feature type="disulfide bond" evidence="1">
    <location>
        <begin position="554"/>
        <end position="587"/>
    </location>
</feature>
<sequence length="588" mass="65872">MFRVAIPRSALNLHSCLLHVTLSLVLISKAAITTAGNEDSDVREARSVSDQQVVHPVDCVISDWSAWSRCDTCQKKRYRYAKLDQPSQFGGEPCHFHDMEDEACDVPDRYTCDSIPLCEGFLCTQTGRCIHRTLQCNGEDDCGDMSDEVGCKKVPKPCRQEAEEYWGIENLAKGINILNSNLEGLVLDNRYYAGSCLPQYIQDVRFRKPHNLQQYTLETKGSYDFNVQSFESYSDYMDYSMRERMTQTIVSIGFAIPGIAEFGFNYNNAKVTRSIQKIRRASSKINSFVSAKAELELAQYMLRSDDLMLHPEFLQRLRSLPQAYVYGEYRQIYRDYGTHYITEAALGGEYEHTIILDKEKLAKTDYSLEDYKSCTQAGLKIGANIYGVYVSAGIEGGSCNGLLNEMGEDTAIGSSVEDFVAVVRGGSSESITGLVSKKLPTPQLMRLWGEGVRFNPDFIRKTTRPLYELVTSKDFSHDATLKRNLKRALSEYLAESSSCRCAPCHNNGVAVLRGTRCDCVCPTGYTGRGCEITQRKKQIATDGSWSCWGAWSSCSGRKMSRSRQCNNPVPSDGGLACRGLQQESTDCF</sequence>
<organism>
    <name type="scientific">Paralichthys olivaceus</name>
    <name type="common">Bastard halibut</name>
    <name type="synonym">Hippoglossus olivaceus</name>
    <dbReference type="NCBI Taxonomy" id="8255"/>
    <lineage>
        <taxon>Eukaryota</taxon>
        <taxon>Metazoa</taxon>
        <taxon>Chordata</taxon>
        <taxon>Craniata</taxon>
        <taxon>Vertebrata</taxon>
        <taxon>Euteleostomi</taxon>
        <taxon>Actinopterygii</taxon>
        <taxon>Neopterygii</taxon>
        <taxon>Teleostei</taxon>
        <taxon>Neoteleostei</taxon>
        <taxon>Acanthomorphata</taxon>
        <taxon>Carangaria</taxon>
        <taxon>Pleuronectiformes</taxon>
        <taxon>Pleuronectoidei</taxon>
        <taxon>Paralichthyidae</taxon>
        <taxon>Paralichthys</taxon>
    </lineage>
</organism>
<keyword id="KW-0106">Calcium</keyword>
<keyword id="KW-0179">Complement alternate pathway</keyword>
<keyword id="KW-0180">Complement pathway</keyword>
<keyword id="KW-0204">Cytolysis</keyword>
<keyword id="KW-1015">Disulfide bond</keyword>
<keyword id="KW-0245">EGF-like domain</keyword>
<keyword id="KW-0325">Glycoprotein</keyword>
<keyword id="KW-0391">Immunity</keyword>
<keyword id="KW-0399">Innate immunity</keyword>
<keyword id="KW-0472">Membrane</keyword>
<keyword id="KW-0473">Membrane attack complex</keyword>
<keyword id="KW-0479">Metal-binding</keyword>
<keyword id="KW-0677">Repeat</keyword>
<keyword id="KW-0964">Secreted</keyword>
<keyword id="KW-0732">Signal</keyword>
<keyword id="KW-1052">Target cell membrane</keyword>
<keyword id="KW-1053">Target membrane</keyword>
<keyword id="KW-0812">Transmembrane</keyword>
<keyword id="KW-1134">Transmembrane beta strand</keyword>
<name>CO8B_PAROL</name>